<dbReference type="EMBL" id="CP000352">
    <property type="protein sequence ID" value="ABF07310.1"/>
    <property type="molecule type" value="Genomic_DNA"/>
</dbReference>
<dbReference type="RefSeq" id="WP_011515299.1">
    <property type="nucleotide sequence ID" value="NC_007973.1"/>
</dbReference>
<dbReference type="SMR" id="Q1LRB6"/>
<dbReference type="STRING" id="266264.Rmet_0424"/>
<dbReference type="KEGG" id="rme:Rmet_0424"/>
<dbReference type="eggNOG" id="COG0632">
    <property type="taxonomic scope" value="Bacteria"/>
</dbReference>
<dbReference type="HOGENOM" id="CLU_087936_0_0_4"/>
<dbReference type="Proteomes" id="UP000002429">
    <property type="component" value="Chromosome"/>
</dbReference>
<dbReference type="GO" id="GO:0005737">
    <property type="term" value="C:cytoplasm"/>
    <property type="evidence" value="ECO:0007669"/>
    <property type="project" value="UniProtKB-SubCell"/>
</dbReference>
<dbReference type="GO" id="GO:0009379">
    <property type="term" value="C:Holliday junction helicase complex"/>
    <property type="evidence" value="ECO:0007669"/>
    <property type="project" value="InterPro"/>
</dbReference>
<dbReference type="GO" id="GO:0048476">
    <property type="term" value="C:Holliday junction resolvase complex"/>
    <property type="evidence" value="ECO:0007669"/>
    <property type="project" value="UniProtKB-UniRule"/>
</dbReference>
<dbReference type="GO" id="GO:0005524">
    <property type="term" value="F:ATP binding"/>
    <property type="evidence" value="ECO:0007669"/>
    <property type="project" value="InterPro"/>
</dbReference>
<dbReference type="GO" id="GO:0000400">
    <property type="term" value="F:four-way junction DNA binding"/>
    <property type="evidence" value="ECO:0007669"/>
    <property type="project" value="UniProtKB-UniRule"/>
</dbReference>
<dbReference type="GO" id="GO:0009378">
    <property type="term" value="F:four-way junction helicase activity"/>
    <property type="evidence" value="ECO:0007669"/>
    <property type="project" value="InterPro"/>
</dbReference>
<dbReference type="GO" id="GO:0006310">
    <property type="term" value="P:DNA recombination"/>
    <property type="evidence" value="ECO:0007669"/>
    <property type="project" value="UniProtKB-UniRule"/>
</dbReference>
<dbReference type="GO" id="GO:0006281">
    <property type="term" value="P:DNA repair"/>
    <property type="evidence" value="ECO:0007669"/>
    <property type="project" value="UniProtKB-UniRule"/>
</dbReference>
<dbReference type="CDD" id="cd14332">
    <property type="entry name" value="UBA_RuvA_C"/>
    <property type="match status" value="1"/>
</dbReference>
<dbReference type="Gene3D" id="1.10.150.20">
    <property type="entry name" value="5' to 3' exonuclease, C-terminal subdomain"/>
    <property type="match status" value="1"/>
</dbReference>
<dbReference type="Gene3D" id="1.10.8.10">
    <property type="entry name" value="DNA helicase RuvA subunit, C-terminal domain"/>
    <property type="match status" value="1"/>
</dbReference>
<dbReference type="Gene3D" id="2.40.50.140">
    <property type="entry name" value="Nucleic acid-binding proteins"/>
    <property type="match status" value="1"/>
</dbReference>
<dbReference type="HAMAP" id="MF_00031">
    <property type="entry name" value="DNA_HJ_migration_RuvA"/>
    <property type="match status" value="1"/>
</dbReference>
<dbReference type="InterPro" id="IPR013849">
    <property type="entry name" value="DNA_helicase_Holl-junc_RuvA_I"/>
</dbReference>
<dbReference type="InterPro" id="IPR003583">
    <property type="entry name" value="Hlx-hairpin-Hlx_DNA-bd_motif"/>
</dbReference>
<dbReference type="InterPro" id="IPR012340">
    <property type="entry name" value="NA-bd_OB-fold"/>
</dbReference>
<dbReference type="InterPro" id="IPR000085">
    <property type="entry name" value="RuvA"/>
</dbReference>
<dbReference type="InterPro" id="IPR010994">
    <property type="entry name" value="RuvA_2-like"/>
</dbReference>
<dbReference type="InterPro" id="IPR011114">
    <property type="entry name" value="RuvA_C"/>
</dbReference>
<dbReference type="InterPro" id="IPR036267">
    <property type="entry name" value="RuvA_C_sf"/>
</dbReference>
<dbReference type="NCBIfam" id="TIGR00084">
    <property type="entry name" value="ruvA"/>
    <property type="match status" value="1"/>
</dbReference>
<dbReference type="Pfam" id="PF14520">
    <property type="entry name" value="HHH_5"/>
    <property type="match status" value="1"/>
</dbReference>
<dbReference type="Pfam" id="PF07499">
    <property type="entry name" value="RuvA_C"/>
    <property type="match status" value="1"/>
</dbReference>
<dbReference type="Pfam" id="PF01330">
    <property type="entry name" value="RuvA_N"/>
    <property type="match status" value="1"/>
</dbReference>
<dbReference type="SMART" id="SM00278">
    <property type="entry name" value="HhH1"/>
    <property type="match status" value="2"/>
</dbReference>
<dbReference type="SUPFAM" id="SSF46929">
    <property type="entry name" value="DNA helicase RuvA subunit, C-terminal domain"/>
    <property type="match status" value="1"/>
</dbReference>
<dbReference type="SUPFAM" id="SSF50249">
    <property type="entry name" value="Nucleic acid-binding proteins"/>
    <property type="match status" value="1"/>
</dbReference>
<dbReference type="SUPFAM" id="SSF47781">
    <property type="entry name" value="RuvA domain 2-like"/>
    <property type="match status" value="1"/>
</dbReference>
<keyword id="KW-0963">Cytoplasm</keyword>
<keyword id="KW-0227">DNA damage</keyword>
<keyword id="KW-0233">DNA recombination</keyword>
<keyword id="KW-0234">DNA repair</keyword>
<keyword id="KW-0238">DNA-binding</keyword>
<keyword id="KW-1185">Reference proteome</keyword>
<comment type="function">
    <text evidence="1">The RuvA-RuvB-RuvC complex processes Holliday junction (HJ) DNA during genetic recombination and DNA repair, while the RuvA-RuvB complex plays an important role in the rescue of blocked DNA replication forks via replication fork reversal (RFR). RuvA specifically binds to HJ cruciform DNA, conferring on it an open structure. The RuvB hexamer acts as an ATP-dependent pump, pulling dsDNA into and through the RuvAB complex. HJ branch migration allows RuvC to scan DNA until it finds its consensus sequence, where it cleaves and resolves the cruciform DNA.</text>
</comment>
<comment type="subunit">
    <text evidence="1">Homotetramer. Forms an RuvA(8)-RuvB(12)-Holliday junction (HJ) complex. HJ DNA is sandwiched between 2 RuvA tetramers; dsDNA enters through RuvA and exits via RuvB. An RuvB hexamer assembles on each DNA strand where it exits the tetramer. Each RuvB hexamer is contacted by two RuvA subunits (via domain III) on 2 adjacent RuvB subunits; this complex drives branch migration. In the full resolvosome a probable DNA-RuvA(4)-RuvB(12)-RuvC(2) complex forms which resolves the HJ.</text>
</comment>
<comment type="subcellular location">
    <subcellularLocation>
        <location evidence="1">Cytoplasm</location>
    </subcellularLocation>
</comment>
<comment type="domain">
    <text evidence="1">Has three domains with a flexible linker between the domains II and III and assumes an 'L' shape. Domain III is highly mobile and contacts RuvB.</text>
</comment>
<comment type="similarity">
    <text evidence="1">Belongs to the RuvA family.</text>
</comment>
<reference key="1">
    <citation type="journal article" date="2010" name="PLoS ONE">
        <title>The complete genome sequence of Cupriavidus metallidurans strain CH34, a master survivalist in harsh and anthropogenic environments.</title>
        <authorList>
            <person name="Janssen P.J."/>
            <person name="Van Houdt R."/>
            <person name="Moors H."/>
            <person name="Monsieurs P."/>
            <person name="Morin N."/>
            <person name="Michaux A."/>
            <person name="Benotmane M.A."/>
            <person name="Leys N."/>
            <person name="Vallaeys T."/>
            <person name="Lapidus A."/>
            <person name="Monchy S."/>
            <person name="Medigue C."/>
            <person name="Taghavi S."/>
            <person name="McCorkle S."/>
            <person name="Dunn J."/>
            <person name="van der Lelie D."/>
            <person name="Mergeay M."/>
        </authorList>
    </citation>
    <scope>NUCLEOTIDE SEQUENCE [LARGE SCALE GENOMIC DNA]</scope>
    <source>
        <strain>ATCC 43123 / DSM 2839 / NBRC 102507 / CH34</strain>
    </source>
</reference>
<accession>Q1LRB6</accession>
<protein>
    <recommendedName>
        <fullName evidence="1">Holliday junction branch migration complex subunit RuvA</fullName>
    </recommendedName>
</protein>
<sequence length="193" mass="20192">MIGRIAGTLLEKNPPHLLVDCHGVGYEIDVPMSTFYNLPAIGHPVTLLTQQIVREDAHLLFGFATATERNTFRELIKITGVGARMALAVLSGLSVPELAQAVTMQEAGRLTKIPGIGKKTAERLLLELKGKLGADLGHAPGATPLADSAVDILNALLALGYSEKEAAQAIKQVPAGTGVSDGIKLALKALSKG</sequence>
<name>RUVA_CUPMC</name>
<evidence type="ECO:0000255" key="1">
    <source>
        <dbReference type="HAMAP-Rule" id="MF_00031"/>
    </source>
</evidence>
<organism>
    <name type="scientific">Cupriavidus metallidurans (strain ATCC 43123 / DSM 2839 / NBRC 102507 / CH34)</name>
    <name type="common">Ralstonia metallidurans</name>
    <dbReference type="NCBI Taxonomy" id="266264"/>
    <lineage>
        <taxon>Bacteria</taxon>
        <taxon>Pseudomonadati</taxon>
        <taxon>Pseudomonadota</taxon>
        <taxon>Betaproteobacteria</taxon>
        <taxon>Burkholderiales</taxon>
        <taxon>Burkholderiaceae</taxon>
        <taxon>Cupriavidus</taxon>
    </lineage>
</organism>
<gene>
    <name evidence="1" type="primary">ruvA</name>
    <name type="ordered locus">Rmet_0424</name>
</gene>
<proteinExistence type="inferred from homology"/>
<feature type="chain" id="PRO_1000002524" description="Holliday junction branch migration complex subunit RuvA">
    <location>
        <begin position="1"/>
        <end position="193"/>
    </location>
</feature>
<feature type="region of interest" description="Domain I" evidence="1">
    <location>
        <begin position="1"/>
        <end position="64"/>
    </location>
</feature>
<feature type="region of interest" description="Domain II" evidence="1">
    <location>
        <begin position="65"/>
        <end position="144"/>
    </location>
</feature>
<feature type="region of interest" description="Flexible linker" evidence="1">
    <location>
        <begin position="145"/>
        <end position="151"/>
    </location>
</feature>
<feature type="region of interest" description="Domain III" evidence="1">
    <location>
        <begin position="151"/>
        <end position="193"/>
    </location>
</feature>